<feature type="signal peptide" evidence="3">
    <location>
        <begin position="1"/>
        <end position="18"/>
    </location>
</feature>
<feature type="chain" id="PRO_5029287148" description="Apolipoprotein E">
    <location>
        <begin position="19"/>
        <end position="299"/>
    </location>
</feature>
<feature type="repeat" description="1">
    <location>
        <begin position="74"/>
        <end position="95"/>
    </location>
</feature>
<feature type="repeat" description="2">
    <location>
        <begin position="96"/>
        <end position="117"/>
    </location>
</feature>
<feature type="repeat" description="3">
    <location>
        <begin position="118"/>
        <end position="139"/>
    </location>
</feature>
<feature type="repeat" description="4">
    <location>
        <begin position="140"/>
        <end position="161"/>
    </location>
</feature>
<feature type="repeat" description="5">
    <location>
        <begin position="162"/>
        <end position="183"/>
    </location>
</feature>
<feature type="repeat" description="6">
    <location>
        <begin position="184"/>
        <end position="205"/>
    </location>
</feature>
<feature type="repeat" description="8">
    <location>
        <begin position="224"/>
        <end position="245"/>
    </location>
</feature>
<feature type="region of interest" description="8 X 22 AA approximate tandem repeats">
    <location>
        <begin position="74"/>
        <end position="245"/>
    </location>
</feature>
<feature type="region of interest" description="LDL and other lipoprotein receptors binding" evidence="1">
    <location>
        <begin position="152"/>
        <end position="162"/>
    </location>
</feature>
<feature type="region of interest" description="Lipid-binding and lipoprotein association" evidence="1">
    <location>
        <begin position="204"/>
        <end position="273"/>
    </location>
</feature>
<feature type="region of interest" description="Specificity for association with VLDL" evidence="1">
    <location>
        <begin position="261"/>
        <end position="273"/>
    </location>
</feature>
<feature type="binding site" evidence="1">
    <location>
        <begin position="156"/>
        <end position="159"/>
    </location>
    <ligand>
        <name>heparin</name>
        <dbReference type="ChEBI" id="CHEBI:28304"/>
    </ligand>
</feature>
<feature type="binding site" evidence="1">
    <location>
        <begin position="219"/>
        <end position="226"/>
    </location>
    <ligand>
        <name>heparin</name>
        <dbReference type="ChEBI" id="CHEBI:28304"/>
    </ligand>
</feature>
<feature type="modified residue" description="Methionine sulfoxide" evidence="2">
    <location>
        <position position="137"/>
    </location>
</feature>
<feature type="modified residue" description="Phosphoserine" evidence="1">
    <location>
        <position position="141"/>
    </location>
</feature>
<gene>
    <name type="primary">APOE</name>
</gene>
<proteinExistence type="inferred from homology"/>
<dbReference type="EMBL" id="AJSA01200869">
    <property type="status" value="NOT_ANNOTATED_CDS"/>
    <property type="molecule type" value="Genomic_DNA"/>
</dbReference>
<dbReference type="RefSeq" id="XP_004644379.1">
    <property type="nucleotide sequence ID" value="XM_004644322.1"/>
</dbReference>
<dbReference type="SMR" id="A0A6P6DKR7"/>
<dbReference type="FunCoup" id="A0A6P6DKR7">
    <property type="interactions" value="207"/>
</dbReference>
<dbReference type="Ensembl" id="ENSODET00000011944">
    <property type="protein sequence ID" value="ENSODEP00000011782"/>
    <property type="gene ID" value="ENSODEG00000008747"/>
</dbReference>
<dbReference type="GeneID" id="101593028"/>
<dbReference type="CTD" id="348"/>
<dbReference type="InParanoid" id="A0A6P6DKR7"/>
<dbReference type="OMA" id="GHMTDAR"/>
<dbReference type="OrthoDB" id="9048614at2759"/>
<dbReference type="Proteomes" id="UP000515203">
    <property type="component" value="Unplaced"/>
</dbReference>
<dbReference type="GO" id="GO:0034360">
    <property type="term" value="C:chylomicron remnant"/>
    <property type="evidence" value="ECO:0007669"/>
    <property type="project" value="Ensembl"/>
</dbReference>
<dbReference type="GO" id="GO:0005783">
    <property type="term" value="C:endoplasmic reticulum"/>
    <property type="evidence" value="ECO:0007669"/>
    <property type="project" value="Ensembl"/>
</dbReference>
<dbReference type="GO" id="GO:0070062">
    <property type="term" value="C:extracellular exosome"/>
    <property type="evidence" value="ECO:0000250"/>
    <property type="project" value="UniProtKB"/>
</dbReference>
<dbReference type="GO" id="GO:0031012">
    <property type="term" value="C:extracellular matrix"/>
    <property type="evidence" value="ECO:0007669"/>
    <property type="project" value="Ensembl"/>
</dbReference>
<dbReference type="GO" id="GO:0098978">
    <property type="term" value="C:glutamatergic synapse"/>
    <property type="evidence" value="ECO:0007669"/>
    <property type="project" value="Ensembl"/>
</dbReference>
<dbReference type="GO" id="GO:0005794">
    <property type="term" value="C:Golgi apparatus"/>
    <property type="evidence" value="ECO:0007669"/>
    <property type="project" value="Ensembl"/>
</dbReference>
<dbReference type="GO" id="GO:0034364">
    <property type="term" value="C:high-density lipoprotein particle"/>
    <property type="evidence" value="ECO:0007669"/>
    <property type="project" value="UniProtKB-KW"/>
</dbReference>
<dbReference type="GO" id="GO:0034363">
    <property type="term" value="C:intermediate-density lipoprotein particle"/>
    <property type="evidence" value="ECO:0007669"/>
    <property type="project" value="Ensembl"/>
</dbReference>
<dbReference type="GO" id="GO:0034362">
    <property type="term" value="C:low-density lipoprotein particle"/>
    <property type="evidence" value="ECO:0007669"/>
    <property type="project" value="Ensembl"/>
</dbReference>
<dbReference type="GO" id="GO:0042470">
    <property type="term" value="C:melanosome"/>
    <property type="evidence" value="ECO:0007669"/>
    <property type="project" value="Ensembl"/>
</dbReference>
<dbReference type="GO" id="GO:0097487">
    <property type="term" value="C:multivesicular body, internal vesicle"/>
    <property type="evidence" value="ECO:0000250"/>
    <property type="project" value="UniProtKB"/>
</dbReference>
<dbReference type="GO" id="GO:0005886">
    <property type="term" value="C:plasma membrane"/>
    <property type="evidence" value="ECO:0007669"/>
    <property type="project" value="GOC"/>
</dbReference>
<dbReference type="GO" id="GO:0043083">
    <property type="term" value="C:synaptic cleft"/>
    <property type="evidence" value="ECO:0007669"/>
    <property type="project" value="Ensembl"/>
</dbReference>
<dbReference type="GO" id="GO:0034361">
    <property type="term" value="C:very-low-density lipoprotein particle"/>
    <property type="evidence" value="ECO:0007669"/>
    <property type="project" value="UniProtKB-KW"/>
</dbReference>
<dbReference type="GO" id="GO:0001540">
    <property type="term" value="F:amyloid-beta binding"/>
    <property type="evidence" value="ECO:0007669"/>
    <property type="project" value="Ensembl"/>
</dbReference>
<dbReference type="GO" id="GO:0016209">
    <property type="term" value="F:antioxidant activity"/>
    <property type="evidence" value="ECO:0007669"/>
    <property type="project" value="Ensembl"/>
</dbReference>
<dbReference type="GO" id="GO:0120020">
    <property type="term" value="F:cholesterol transfer activity"/>
    <property type="evidence" value="ECO:0007669"/>
    <property type="project" value="Ensembl"/>
</dbReference>
<dbReference type="GO" id="GO:0019899">
    <property type="term" value="F:enzyme binding"/>
    <property type="evidence" value="ECO:0007669"/>
    <property type="project" value="Ensembl"/>
</dbReference>
<dbReference type="GO" id="GO:0043395">
    <property type="term" value="F:heparan sulfate proteoglycan binding"/>
    <property type="evidence" value="ECO:0007669"/>
    <property type="project" value="Ensembl"/>
</dbReference>
<dbReference type="GO" id="GO:0008201">
    <property type="term" value="F:heparin binding"/>
    <property type="evidence" value="ECO:0007669"/>
    <property type="project" value="UniProtKB-KW"/>
</dbReference>
<dbReference type="GO" id="GO:0071813">
    <property type="term" value="F:lipoprotein particle binding"/>
    <property type="evidence" value="ECO:0007669"/>
    <property type="project" value="Ensembl"/>
</dbReference>
<dbReference type="GO" id="GO:0050750">
    <property type="term" value="F:low-density lipoprotein particle receptor binding"/>
    <property type="evidence" value="ECO:0007669"/>
    <property type="project" value="Ensembl"/>
</dbReference>
<dbReference type="GO" id="GO:0046911">
    <property type="term" value="F:metal chelating activity"/>
    <property type="evidence" value="ECO:0007669"/>
    <property type="project" value="Ensembl"/>
</dbReference>
<dbReference type="GO" id="GO:0060228">
    <property type="term" value="F:phosphatidylcholine-sterol O-acyltransferase activator activity"/>
    <property type="evidence" value="ECO:0007669"/>
    <property type="project" value="Ensembl"/>
</dbReference>
<dbReference type="GO" id="GO:0005543">
    <property type="term" value="F:phospholipid binding"/>
    <property type="evidence" value="ECO:0007669"/>
    <property type="project" value="Ensembl"/>
</dbReference>
<dbReference type="GO" id="GO:0042803">
    <property type="term" value="F:protein homodimerization activity"/>
    <property type="evidence" value="ECO:0007669"/>
    <property type="project" value="Ensembl"/>
</dbReference>
<dbReference type="GO" id="GO:0048018">
    <property type="term" value="F:receptor ligand activity"/>
    <property type="evidence" value="ECO:0007669"/>
    <property type="project" value="Ensembl"/>
</dbReference>
<dbReference type="GO" id="GO:0048156">
    <property type="term" value="F:tau protein binding"/>
    <property type="evidence" value="ECO:0007669"/>
    <property type="project" value="Ensembl"/>
</dbReference>
<dbReference type="GO" id="GO:0070326">
    <property type="term" value="F:very-low-density lipoprotein particle receptor binding"/>
    <property type="evidence" value="ECO:0007669"/>
    <property type="project" value="Ensembl"/>
</dbReference>
<dbReference type="GO" id="GO:0097113">
    <property type="term" value="P:AMPA glutamate receptor clustering"/>
    <property type="evidence" value="ECO:0007669"/>
    <property type="project" value="Ensembl"/>
</dbReference>
<dbReference type="GO" id="GO:0042982">
    <property type="term" value="P:amyloid precursor protein metabolic process"/>
    <property type="evidence" value="ECO:0007669"/>
    <property type="project" value="Ensembl"/>
</dbReference>
<dbReference type="GO" id="GO:0048844">
    <property type="term" value="P:artery morphogenesis"/>
    <property type="evidence" value="ECO:0007669"/>
    <property type="project" value="Ensembl"/>
</dbReference>
<dbReference type="GO" id="GO:0071402">
    <property type="term" value="P:cellular response to lipoprotein particle stimulus"/>
    <property type="evidence" value="ECO:0007669"/>
    <property type="project" value="Ensembl"/>
</dbReference>
<dbReference type="GO" id="GO:0006707">
    <property type="term" value="P:cholesterol catabolic process"/>
    <property type="evidence" value="ECO:0007669"/>
    <property type="project" value="Ensembl"/>
</dbReference>
<dbReference type="GO" id="GO:0033344">
    <property type="term" value="P:cholesterol efflux"/>
    <property type="evidence" value="ECO:0007669"/>
    <property type="project" value="Ensembl"/>
</dbReference>
<dbReference type="GO" id="GO:0042632">
    <property type="term" value="P:cholesterol homeostasis"/>
    <property type="evidence" value="ECO:0007669"/>
    <property type="project" value="Ensembl"/>
</dbReference>
<dbReference type="GO" id="GO:0034382">
    <property type="term" value="P:chylomicron remnant clearance"/>
    <property type="evidence" value="ECO:0007669"/>
    <property type="project" value="Ensembl"/>
</dbReference>
<dbReference type="GO" id="GO:0055089">
    <property type="term" value="P:fatty acid homeostasis"/>
    <property type="evidence" value="ECO:0007669"/>
    <property type="project" value="Ensembl"/>
</dbReference>
<dbReference type="GO" id="GO:0007186">
    <property type="term" value="P:G protein-coupled receptor signaling pathway"/>
    <property type="evidence" value="ECO:0007669"/>
    <property type="project" value="Ensembl"/>
</dbReference>
<dbReference type="GO" id="GO:0010467">
    <property type="term" value="P:gene expression"/>
    <property type="evidence" value="ECO:0007669"/>
    <property type="project" value="Ensembl"/>
</dbReference>
<dbReference type="GO" id="GO:0034380">
    <property type="term" value="P:high-density lipoprotein particle assembly"/>
    <property type="evidence" value="ECO:0007669"/>
    <property type="project" value="Ensembl"/>
</dbReference>
<dbReference type="GO" id="GO:0034384">
    <property type="term" value="P:high-density lipoprotein particle clearance"/>
    <property type="evidence" value="ECO:0007669"/>
    <property type="project" value="Ensembl"/>
</dbReference>
<dbReference type="GO" id="GO:0034375">
    <property type="term" value="P:high-density lipoprotein particle remodeling"/>
    <property type="evidence" value="ECO:0007669"/>
    <property type="project" value="Ensembl"/>
</dbReference>
<dbReference type="GO" id="GO:0071831">
    <property type="term" value="P:intermediate-density lipoprotein particle clearance"/>
    <property type="evidence" value="ECO:0007669"/>
    <property type="project" value="Ensembl"/>
</dbReference>
<dbReference type="GO" id="GO:0006874">
    <property type="term" value="P:intracellular calcium ion homeostasis"/>
    <property type="evidence" value="ECO:0007669"/>
    <property type="project" value="Ensembl"/>
</dbReference>
<dbReference type="GO" id="GO:0010877">
    <property type="term" value="P:lipid transport involved in lipid storage"/>
    <property type="evidence" value="ECO:0007669"/>
    <property type="project" value="Ensembl"/>
</dbReference>
<dbReference type="GO" id="GO:0042158">
    <property type="term" value="P:lipoprotein biosynthetic process"/>
    <property type="evidence" value="ECO:0007669"/>
    <property type="project" value="Ensembl"/>
</dbReference>
<dbReference type="GO" id="GO:0042159">
    <property type="term" value="P:lipoprotein catabolic process"/>
    <property type="evidence" value="ECO:0007669"/>
    <property type="project" value="Ensembl"/>
</dbReference>
<dbReference type="GO" id="GO:0035641">
    <property type="term" value="P:locomotory exploration behavior"/>
    <property type="evidence" value="ECO:0007669"/>
    <property type="project" value="Ensembl"/>
</dbReference>
<dbReference type="GO" id="GO:0015909">
    <property type="term" value="P:long-chain fatty acid transport"/>
    <property type="evidence" value="ECO:0007669"/>
    <property type="project" value="Ensembl"/>
</dbReference>
<dbReference type="GO" id="GO:0007616">
    <property type="term" value="P:long-term memory"/>
    <property type="evidence" value="ECO:0007669"/>
    <property type="project" value="Ensembl"/>
</dbReference>
<dbReference type="GO" id="GO:0034374">
    <property type="term" value="P:low-density lipoprotein particle remodeling"/>
    <property type="evidence" value="ECO:0007669"/>
    <property type="project" value="Ensembl"/>
</dbReference>
<dbReference type="GO" id="GO:0051651">
    <property type="term" value="P:maintenance of location in cell"/>
    <property type="evidence" value="ECO:0007669"/>
    <property type="project" value="Ensembl"/>
</dbReference>
<dbReference type="GO" id="GO:0032438">
    <property type="term" value="P:melanosome organization"/>
    <property type="evidence" value="ECO:0000250"/>
    <property type="project" value="UniProtKB"/>
</dbReference>
<dbReference type="GO" id="GO:1905907">
    <property type="term" value="P:negative regulation of amyloid fibril formation"/>
    <property type="evidence" value="ECO:0007669"/>
    <property type="project" value="Ensembl"/>
</dbReference>
<dbReference type="GO" id="GO:1902430">
    <property type="term" value="P:negative regulation of amyloid-beta formation"/>
    <property type="evidence" value="ECO:0007669"/>
    <property type="project" value="Ensembl"/>
</dbReference>
<dbReference type="GO" id="GO:0043537">
    <property type="term" value="P:negative regulation of blood vessel endothelial cell migration"/>
    <property type="evidence" value="ECO:0007669"/>
    <property type="project" value="Ensembl"/>
</dbReference>
<dbReference type="GO" id="GO:0090090">
    <property type="term" value="P:negative regulation of canonical Wnt signaling pathway"/>
    <property type="evidence" value="ECO:0007669"/>
    <property type="project" value="Ensembl"/>
</dbReference>
<dbReference type="GO" id="GO:0045541">
    <property type="term" value="P:negative regulation of cholesterol biosynthetic process"/>
    <property type="evidence" value="ECO:0007669"/>
    <property type="project" value="Ensembl"/>
</dbReference>
<dbReference type="GO" id="GO:0001937">
    <property type="term" value="P:negative regulation of endothelial cell proliferation"/>
    <property type="evidence" value="ECO:0007669"/>
    <property type="project" value="Ensembl"/>
</dbReference>
<dbReference type="GO" id="GO:0010629">
    <property type="term" value="P:negative regulation of gene expression"/>
    <property type="evidence" value="ECO:0007669"/>
    <property type="project" value="Ensembl"/>
</dbReference>
<dbReference type="GO" id="GO:0050728">
    <property type="term" value="P:negative regulation of inflammatory response"/>
    <property type="evidence" value="ECO:0007669"/>
    <property type="project" value="Ensembl"/>
</dbReference>
<dbReference type="GO" id="GO:1900272">
    <property type="term" value="P:negative regulation of long-term synaptic potentiation"/>
    <property type="evidence" value="ECO:0007669"/>
    <property type="project" value="Ensembl"/>
</dbReference>
<dbReference type="GO" id="GO:0010977">
    <property type="term" value="P:negative regulation of neuron projection development"/>
    <property type="evidence" value="ECO:0007669"/>
    <property type="project" value="Ensembl"/>
</dbReference>
<dbReference type="GO" id="GO:0010544">
    <property type="term" value="P:negative regulation of platelet activation"/>
    <property type="evidence" value="ECO:0007669"/>
    <property type="project" value="Ensembl"/>
</dbReference>
<dbReference type="GO" id="GO:0050709">
    <property type="term" value="P:negative regulation of protein secretion"/>
    <property type="evidence" value="ECO:0007669"/>
    <property type="project" value="Ensembl"/>
</dbReference>
<dbReference type="GO" id="GO:0048662">
    <property type="term" value="P:negative regulation of smooth muscle cell proliferation"/>
    <property type="evidence" value="ECO:0007669"/>
    <property type="project" value="Ensembl"/>
</dbReference>
<dbReference type="GO" id="GO:0090209">
    <property type="term" value="P:negative regulation of triglyceride metabolic process"/>
    <property type="evidence" value="ECO:0007669"/>
    <property type="project" value="Ensembl"/>
</dbReference>
<dbReference type="GO" id="GO:0031175">
    <property type="term" value="P:neuron projection development"/>
    <property type="evidence" value="ECO:0007669"/>
    <property type="project" value="Ensembl"/>
</dbReference>
<dbReference type="GO" id="GO:0038060">
    <property type="term" value="P:nitric oxide-cGMP-mediated signaling"/>
    <property type="evidence" value="ECO:0007669"/>
    <property type="project" value="Ensembl"/>
</dbReference>
<dbReference type="GO" id="GO:0097114">
    <property type="term" value="P:NMDA glutamate receptor clustering"/>
    <property type="evidence" value="ECO:0007669"/>
    <property type="project" value="Ensembl"/>
</dbReference>
<dbReference type="GO" id="GO:0033700">
    <property type="term" value="P:phospholipid efflux"/>
    <property type="evidence" value="ECO:0007669"/>
    <property type="project" value="Ensembl"/>
</dbReference>
<dbReference type="GO" id="GO:0044794">
    <property type="term" value="P:positive regulation by host of viral process"/>
    <property type="evidence" value="ECO:0007669"/>
    <property type="project" value="Ensembl"/>
</dbReference>
<dbReference type="GO" id="GO:1900223">
    <property type="term" value="P:positive regulation of amyloid-beta clearance"/>
    <property type="evidence" value="ECO:0007669"/>
    <property type="project" value="Ensembl"/>
</dbReference>
<dbReference type="GO" id="GO:0010875">
    <property type="term" value="P:positive regulation of cholesterol efflux"/>
    <property type="evidence" value="ECO:0007669"/>
    <property type="project" value="Ensembl"/>
</dbReference>
<dbReference type="GO" id="GO:0090205">
    <property type="term" value="P:positive regulation of cholesterol metabolic process"/>
    <property type="evidence" value="ECO:0007669"/>
    <property type="project" value="Ensembl"/>
</dbReference>
<dbReference type="GO" id="GO:0060999">
    <property type="term" value="P:positive regulation of dendritic spine development"/>
    <property type="evidence" value="ECO:0007669"/>
    <property type="project" value="Ensembl"/>
</dbReference>
<dbReference type="GO" id="GO:1902952">
    <property type="term" value="P:positive regulation of dendritic spine maintenance"/>
    <property type="evidence" value="ECO:0007669"/>
    <property type="project" value="Ensembl"/>
</dbReference>
<dbReference type="GO" id="GO:0045893">
    <property type="term" value="P:positive regulation of DNA-templated transcription"/>
    <property type="evidence" value="ECO:0007669"/>
    <property type="project" value="Ensembl"/>
</dbReference>
<dbReference type="GO" id="GO:0045807">
    <property type="term" value="P:positive regulation of endocytosis"/>
    <property type="evidence" value="ECO:0007669"/>
    <property type="project" value="Ensembl"/>
</dbReference>
<dbReference type="GO" id="GO:0070374">
    <property type="term" value="P:positive regulation of ERK1 and ERK2 cascade"/>
    <property type="evidence" value="ECO:0007669"/>
    <property type="project" value="Ensembl"/>
</dbReference>
<dbReference type="GO" id="GO:0046889">
    <property type="term" value="P:positive regulation of lipid biosynthetic process"/>
    <property type="evidence" value="ECO:0007669"/>
    <property type="project" value="Ensembl"/>
</dbReference>
<dbReference type="GO" id="GO:1903002">
    <property type="term" value="P:positive regulation of lipid transport across blood-brain barrier"/>
    <property type="evidence" value="ECO:0007669"/>
    <property type="project" value="Ensembl"/>
</dbReference>
<dbReference type="GO" id="GO:0140077">
    <property type="term" value="P:positive regulation of lipoprotein transport"/>
    <property type="evidence" value="ECO:0007669"/>
    <property type="project" value="Ensembl"/>
</dbReference>
<dbReference type="GO" id="GO:0032805">
    <property type="term" value="P:positive regulation of low-density lipoprotein particle receptor catabolic process"/>
    <property type="evidence" value="ECO:0007669"/>
    <property type="project" value="Ensembl"/>
</dbReference>
<dbReference type="GO" id="GO:0051044">
    <property type="term" value="P:positive regulation of membrane protein ectodomain proteolysis"/>
    <property type="evidence" value="ECO:0007669"/>
    <property type="project" value="Ensembl"/>
</dbReference>
<dbReference type="GO" id="GO:0010976">
    <property type="term" value="P:positive regulation of neuron projection development"/>
    <property type="evidence" value="ECO:0007669"/>
    <property type="project" value="Ensembl"/>
</dbReference>
<dbReference type="GO" id="GO:0045429">
    <property type="term" value="P:positive regulation of nitric oxide biosynthetic process"/>
    <property type="evidence" value="ECO:0007669"/>
    <property type="project" value="Ensembl"/>
</dbReference>
<dbReference type="GO" id="GO:1902995">
    <property type="term" value="P:positive regulation of phospholipid efflux"/>
    <property type="evidence" value="ECO:0007669"/>
    <property type="project" value="Ensembl"/>
</dbReference>
<dbReference type="GO" id="GO:0017038">
    <property type="term" value="P:protein import"/>
    <property type="evidence" value="ECO:0007669"/>
    <property type="project" value="Ensembl"/>
</dbReference>
<dbReference type="GO" id="GO:0006898">
    <property type="term" value="P:receptor-mediated endocytosis"/>
    <property type="evidence" value="ECO:0007669"/>
    <property type="project" value="Ensembl"/>
</dbReference>
<dbReference type="GO" id="GO:0042981">
    <property type="term" value="P:regulation of apoptotic process"/>
    <property type="evidence" value="ECO:0007669"/>
    <property type="project" value="Ensembl"/>
</dbReference>
<dbReference type="GO" id="GO:2000822">
    <property type="term" value="P:regulation of behavioral fear response"/>
    <property type="evidence" value="ECO:0007669"/>
    <property type="project" value="Ensembl"/>
</dbReference>
<dbReference type="GO" id="GO:0032489">
    <property type="term" value="P:regulation of Cdc42 protein signal transduction"/>
    <property type="evidence" value="ECO:0007669"/>
    <property type="project" value="Ensembl"/>
</dbReference>
<dbReference type="GO" id="GO:1905890">
    <property type="term" value="P:regulation of cellular response to very-low-density lipoprotein particle stimulus"/>
    <property type="evidence" value="ECO:0007669"/>
    <property type="project" value="Ensembl"/>
</dbReference>
<dbReference type="GO" id="GO:0045088">
    <property type="term" value="P:regulation of innate immune response"/>
    <property type="evidence" value="ECO:0007669"/>
    <property type="project" value="Ensembl"/>
</dbReference>
<dbReference type="GO" id="GO:0061136">
    <property type="term" value="P:regulation of proteasomal protein catabolic process"/>
    <property type="evidence" value="ECO:0007669"/>
    <property type="project" value="Ensembl"/>
</dbReference>
<dbReference type="GO" id="GO:0043254">
    <property type="term" value="P:regulation of protein-containing complex assembly"/>
    <property type="evidence" value="ECO:0007669"/>
    <property type="project" value="Ensembl"/>
</dbReference>
<dbReference type="GO" id="GO:0061771">
    <property type="term" value="P:response to caloric restriction"/>
    <property type="evidence" value="ECO:0007669"/>
    <property type="project" value="Ensembl"/>
</dbReference>
<dbReference type="GO" id="GO:0002021">
    <property type="term" value="P:response to dietary excess"/>
    <property type="evidence" value="ECO:0007669"/>
    <property type="project" value="Ensembl"/>
</dbReference>
<dbReference type="GO" id="GO:0006979">
    <property type="term" value="P:response to oxidative stress"/>
    <property type="evidence" value="ECO:0007669"/>
    <property type="project" value="Ensembl"/>
</dbReference>
<dbReference type="GO" id="GO:0043691">
    <property type="term" value="P:reverse cholesterol transport"/>
    <property type="evidence" value="ECO:0007669"/>
    <property type="project" value="Ensembl"/>
</dbReference>
<dbReference type="GO" id="GO:0070328">
    <property type="term" value="P:triglyceride homeostasis"/>
    <property type="evidence" value="ECO:0007669"/>
    <property type="project" value="Ensembl"/>
</dbReference>
<dbReference type="GO" id="GO:0006641">
    <property type="term" value="P:triglyceride metabolic process"/>
    <property type="evidence" value="ECO:0007669"/>
    <property type="project" value="Ensembl"/>
</dbReference>
<dbReference type="GO" id="GO:0042311">
    <property type="term" value="P:vasodilation"/>
    <property type="evidence" value="ECO:0007669"/>
    <property type="project" value="Ensembl"/>
</dbReference>
<dbReference type="GO" id="GO:0034447">
    <property type="term" value="P:very-low-density lipoprotein particle clearance"/>
    <property type="evidence" value="ECO:0007669"/>
    <property type="project" value="Ensembl"/>
</dbReference>
<dbReference type="GO" id="GO:0034372">
    <property type="term" value="P:very-low-density lipoprotein particle remodeling"/>
    <property type="evidence" value="ECO:0007669"/>
    <property type="project" value="Ensembl"/>
</dbReference>
<dbReference type="GO" id="GO:0019068">
    <property type="term" value="P:virion assembly"/>
    <property type="evidence" value="ECO:0007669"/>
    <property type="project" value="Ensembl"/>
</dbReference>
<dbReference type="FunFam" id="1.20.120.20:FF:000002">
    <property type="entry name" value="Apolipoprotein E"/>
    <property type="match status" value="1"/>
</dbReference>
<dbReference type="FunFam" id="1.20.120.20:FF:000003">
    <property type="entry name" value="Apolipoprotein E"/>
    <property type="match status" value="1"/>
</dbReference>
<dbReference type="Gene3D" id="1.20.120.20">
    <property type="entry name" value="Apolipoprotein"/>
    <property type="match status" value="2"/>
</dbReference>
<dbReference type="InterPro" id="IPR000074">
    <property type="entry name" value="ApoA_E"/>
</dbReference>
<dbReference type="InterPro" id="IPR050163">
    <property type="entry name" value="Apolipoprotein_A1/A4/E"/>
</dbReference>
<dbReference type="PANTHER" id="PTHR18976">
    <property type="entry name" value="APOLIPOPROTEIN"/>
    <property type="match status" value="1"/>
</dbReference>
<dbReference type="PANTHER" id="PTHR18976:SF2">
    <property type="entry name" value="APOLIPOPROTEIN E"/>
    <property type="match status" value="1"/>
</dbReference>
<dbReference type="Pfam" id="PF01442">
    <property type="entry name" value="Apolipoprotein"/>
    <property type="match status" value="1"/>
</dbReference>
<dbReference type="SUPFAM" id="SSF58113">
    <property type="entry name" value="Apolipoprotein A-I"/>
    <property type="match status" value="1"/>
</dbReference>
<protein>
    <recommendedName>
        <fullName>Apolipoprotein E</fullName>
        <shortName>Apo-E</shortName>
    </recommendedName>
</protein>
<keyword id="KW-0162">Chylomicron</keyword>
<keyword id="KW-0967">Endosome</keyword>
<keyword id="KW-0272">Extracellular matrix</keyword>
<keyword id="KW-0325">Glycoprotein</keyword>
<keyword id="KW-0345">HDL</keyword>
<keyword id="KW-0358">Heparin-binding</keyword>
<keyword id="KW-0445">Lipid transport</keyword>
<keyword id="KW-0446">Lipid-binding</keyword>
<keyword id="KW-0558">Oxidation</keyword>
<keyword id="KW-0597">Phosphoprotein</keyword>
<keyword id="KW-1185">Reference proteome</keyword>
<keyword id="KW-0677">Repeat</keyword>
<keyword id="KW-0964">Secreted</keyword>
<keyword id="KW-0732">Signal</keyword>
<keyword id="KW-0813">Transport</keyword>
<keyword id="KW-0850">VLDL</keyword>
<organism>
    <name type="scientific">Octodon degus</name>
    <name type="common">Degu</name>
    <name type="synonym">Sciurus degus</name>
    <dbReference type="NCBI Taxonomy" id="10160"/>
    <lineage>
        <taxon>Eukaryota</taxon>
        <taxon>Metazoa</taxon>
        <taxon>Chordata</taxon>
        <taxon>Craniata</taxon>
        <taxon>Vertebrata</taxon>
        <taxon>Euteleostomi</taxon>
        <taxon>Mammalia</taxon>
        <taxon>Eutheria</taxon>
        <taxon>Euarchontoglires</taxon>
        <taxon>Glires</taxon>
        <taxon>Rodentia</taxon>
        <taxon>Hystricomorpha</taxon>
        <taxon>Octodontidae</taxon>
        <taxon>Octodon</taxon>
    </lineage>
</organism>
<sequence>MKVLCTVLVVTLLAGCRADVEPEPEVLEPAVWKSGQPWELALGRFWDYVRWVQTLSDQVQEELLSSQVTQELTVLMEDTMKAVKAYKSELEQELVPMAEDTKARLSKELQAAQARLGADMEEVRNRLAQYRNEMQAMLGQSADELRARLASHLRKLRKRMLRDAEDLQKRLAVYKDGASEGAERGVSAIRERLGSLVEQSRVRAALTGQPLQERAQAWGKQLRGRLEEVRGQAQDRLEEMREQMEEVRVKIEEQAEAFQTRLKGWFEPMVEDMRRQWADLIEKVQAAVGASTPVPSQKP</sequence>
<name>APOE_OCTDE</name>
<comment type="function">
    <text evidence="1">APOE is an apolipoprotein, a protein associating with lipid particles, that mainly functions in lipoprotein-mediated lipid transport between organs via the plasma and interstitial fluids. APOE is a core component of plasma lipoproteins and is involved in their production, conversion and clearance. Apolipoproteins are amphipathic molecules that interact both with lipids of the lipoprotein particle core and the aqueous environment of the plasma. As such, APOE associates with chylomicrons, chylomicron remnants, very low density lipoproteins (VLDL) and intermediate density lipoproteins (IDL) but shows a preferential binding to high-density lipoproteins (HDL). It also binds a wide range of cellular receptors including the LDL receptor/LDLR, the LDL receptor-related proteins LRP1, LRP2 and LRP8 and the very low-density lipoprotein receptor/VLDLR that mediate the cellular uptake of the APOE-containing lipoprotein particles. Finally, APOE also has a heparin-binding activity and binds heparan-sulfate proteoglycans on the surface of cells, a property that supports the capture and the receptor-mediated uptake of APOE-containing lipoproteins by cells. A main function of APOE is to mediate lipoprotein clearance through the uptake of chylomicrons, VLDLs, and HDLs by hepatocytes. APOE is also involved in the biosynthesis by the liver of VLDLs as well as their uptake by peripheral tissues ensuring the delivery of triglycerides and energy storage in muscle, heart and adipose tissues. By participating in the lipoprotein-mediated distribution of lipids among tissues, APOE plays a critical role in plasma and tissues lipid homeostasis. APOE is also involved in two steps of reverse cholesterol transport, the HDLs-mediated transport of cholesterol from peripheral tissues to the liver, and thereby plays an important role in cholesterol homeostasis. First, it is functionally associated with ABCA1 in the biogenesis of HDLs in tissues. Second, it is enriched in circulating HDLs and mediates their uptake by hepatocytes. APOE also plays an important role in lipid transport in the central nervous system, regulating neuron survival and sprouting.</text>
</comment>
<comment type="subunit">
    <text evidence="1">Homotetramer. May interact with ABCA1; functionally associated with ABCA1 in the biogenesis of HDLs. May interact with APP/A4 amyloid-beta peptide; the interaction is extremely stable in vitro but its physiological significance is unclear. May interact with MAPT. May interact with MAP2. In the cerebrospinal fluid, interacts with secreted SORL1. Interacts with PMEL; this allows the loading of PMEL luminal fragment on ILVs to induce fibril nucleation.</text>
</comment>
<comment type="subcellular location">
    <subcellularLocation>
        <location evidence="1">Secreted</location>
    </subcellularLocation>
    <subcellularLocation>
        <location evidence="1">Secreted</location>
        <location evidence="1">Extracellular space</location>
    </subcellularLocation>
    <subcellularLocation>
        <location evidence="1">Secreted</location>
        <location evidence="1">Extracellular space</location>
        <location evidence="1">Extracellular matrix</location>
    </subcellularLocation>
    <subcellularLocation>
        <location evidence="1">Extracellular vesicle</location>
    </subcellularLocation>
    <subcellularLocation>
        <location evidence="1">Endosome</location>
        <location evidence="1">Multivesicular body</location>
    </subcellularLocation>
    <text evidence="1">In the plasma, APOE is associated with chylomicrons, chylomicrons remnants, VLDL, LDL and HDL lipoproteins. Lipid poor oligomeric APOE is associated with the extracellular matrix in a calcium- and heparan-sulfate proteoglycans-dependent manner. Lipidation induces the release from the extracellular matrix. Colocalizes with CD63 and PMEL at exosomes and in intraluminal vesicles within multivesicular endosomes.</text>
</comment>
<comment type="PTM">
    <text evidence="1">APOE exists as multiple glycosylated and sialylated glycoforms within cells and in plasma. The extent of glycosylation and sialylation are tissue and context specific.</text>
</comment>
<comment type="PTM">
    <text evidence="1">Glycated in plasma VLDL.</text>
</comment>
<comment type="PTM">
    <text evidence="1">Phosphorylated by FAM20C in the extracellular medium.</text>
</comment>
<comment type="similarity">
    <text evidence="4">Belongs to the apolipoprotein A1/A4/E family.</text>
</comment>
<accession>A0A6P6DKR7</accession>
<reference key="1">
    <citation type="submission" date="2012-04" db="EMBL/GenBank/DDBJ databases">
        <title>The Draft Genome of Octodon degus.</title>
        <authorList>
            <person name="Di Palma F."/>
            <person name="Alfoldi J."/>
            <person name="Johnson J."/>
            <person name="Berlin A."/>
            <person name="Gnerre S."/>
            <person name="Jaffe D."/>
            <person name="MacCallum I."/>
            <person name="Young S."/>
            <person name="Walker B.J."/>
            <person name="Lindblad-Toh K."/>
        </authorList>
    </citation>
    <scope>NUCLEOTIDE SEQUENCE [LARGE SCALE GENOMIC DNA]</scope>
</reference>
<reference key="2">
    <citation type="unpublished observations" date="2021-07">
        <authorList>
            <person name="Puppione D.L."/>
        </authorList>
    </citation>
    <scope>IDENTIFICATION</scope>
</reference>
<evidence type="ECO:0000250" key="1">
    <source>
        <dbReference type="UniProtKB" id="P02649"/>
    </source>
</evidence>
<evidence type="ECO:0000250" key="2">
    <source>
        <dbReference type="UniProtKB" id="P08226"/>
    </source>
</evidence>
<evidence type="ECO:0000255" key="3"/>
<evidence type="ECO:0000305" key="4"/>